<comment type="function">
    <text>PLA2 catalyzes the calcium-dependent hydrolysis of the 2-acyl groups in 3-sn-phosphoglycerides.</text>
</comment>
<comment type="catalytic activity">
    <reaction evidence="2 3">
        <text>a 1,2-diacyl-sn-glycero-3-phosphocholine + H2O = a 1-acyl-sn-glycero-3-phosphocholine + a fatty acid + H(+)</text>
        <dbReference type="Rhea" id="RHEA:15801"/>
        <dbReference type="ChEBI" id="CHEBI:15377"/>
        <dbReference type="ChEBI" id="CHEBI:15378"/>
        <dbReference type="ChEBI" id="CHEBI:28868"/>
        <dbReference type="ChEBI" id="CHEBI:57643"/>
        <dbReference type="ChEBI" id="CHEBI:58168"/>
        <dbReference type="EC" id="3.1.1.4"/>
    </reaction>
</comment>
<comment type="cofactor">
    <cofactor evidence="1">
        <name>Ca(2+)</name>
        <dbReference type="ChEBI" id="CHEBI:29108"/>
    </cofactor>
    <text evidence="1">Binds 1 Ca(2+) ion.</text>
</comment>
<comment type="subcellular location">
    <subcellularLocation>
        <location>Secreted</location>
    </subcellularLocation>
</comment>
<comment type="tissue specificity">
    <text>Expressed by the venom gland.</text>
</comment>
<comment type="toxic dose">
    <text evidence="4">LD(50) is 3.4 mg/kg by intravenous injection.</text>
</comment>
<comment type="similarity">
    <text evidence="5">Belongs to the phospholipase A2 family. Group I subfamily. D49 sub-subfamily.</text>
</comment>
<proteinExistence type="evidence at protein level"/>
<name>PA2BE_PSEAU</name>
<reference key="1">
    <citation type="journal article" date="1990" name="Toxicon">
        <title>Amino acid sequences of eight phospholipases A2 from the venom of Australian king brown snake, Pseudechis australis.</title>
        <authorList>
            <person name="Takasaki C."/>
            <person name="Yutani F."/>
            <person name="Kajiyashiki T."/>
        </authorList>
    </citation>
    <scope>PROTEIN SEQUENCE</scope>
    <scope>TOXIC DOSE</scope>
    <source>
        <tissue>Venom</tissue>
    </source>
</reference>
<protein>
    <recommendedName>
        <fullName>Basic phospholipase A2 PA-15</fullName>
        <shortName>svPLA2</shortName>
        <ecNumber>3.1.1.4</ecNumber>
    </recommendedName>
    <alternativeName>
        <fullName>Phosphatidylcholine 2-acylhydrolase</fullName>
    </alternativeName>
</protein>
<keyword id="KW-0106">Calcium</keyword>
<keyword id="KW-0903">Direct protein sequencing</keyword>
<keyword id="KW-1015">Disulfide bond</keyword>
<keyword id="KW-0378">Hydrolase</keyword>
<keyword id="KW-0442">Lipid degradation</keyword>
<keyword id="KW-0443">Lipid metabolism</keyword>
<keyword id="KW-0479">Metal-binding</keyword>
<keyword id="KW-0964">Secreted</keyword>
<evidence type="ECO:0000250" key="1"/>
<evidence type="ECO:0000255" key="2">
    <source>
        <dbReference type="PROSITE-ProRule" id="PRU10035"/>
    </source>
</evidence>
<evidence type="ECO:0000255" key="3">
    <source>
        <dbReference type="PROSITE-ProRule" id="PRU10036"/>
    </source>
</evidence>
<evidence type="ECO:0000269" key="4">
    <source>
    </source>
</evidence>
<evidence type="ECO:0000305" key="5"/>
<organism>
    <name type="scientific">Pseudechis australis</name>
    <name type="common">Mulga snake</name>
    <name type="synonym">King brown snake</name>
    <dbReference type="NCBI Taxonomy" id="8670"/>
    <lineage>
        <taxon>Eukaryota</taxon>
        <taxon>Metazoa</taxon>
        <taxon>Chordata</taxon>
        <taxon>Craniata</taxon>
        <taxon>Vertebrata</taxon>
        <taxon>Euteleostomi</taxon>
        <taxon>Lepidosauria</taxon>
        <taxon>Squamata</taxon>
        <taxon>Bifurcata</taxon>
        <taxon>Unidentata</taxon>
        <taxon>Episquamata</taxon>
        <taxon>Toxicofera</taxon>
        <taxon>Serpentes</taxon>
        <taxon>Colubroidea</taxon>
        <taxon>Elapidae</taxon>
        <taxon>Hydrophiinae</taxon>
        <taxon>Pseudechis</taxon>
    </lineage>
</organism>
<sequence>NILQFRKMIQCANKGSRAAWHYLDYGCYCGPGGRGTPVDELDRCCKIHDDCYIEAGKDGCYPKLTWYSWQCTGDAPTCNPKSKCKDFVCACDAAAAKCFAKAAYNKANWNIDTKTRCK</sequence>
<accession>P20257</accession>
<dbReference type="EC" id="3.1.1.4"/>
<dbReference type="PIR" id="H34860">
    <property type="entry name" value="H34860"/>
</dbReference>
<dbReference type="SMR" id="P20257"/>
<dbReference type="GO" id="GO:0005576">
    <property type="term" value="C:extracellular region"/>
    <property type="evidence" value="ECO:0007669"/>
    <property type="project" value="UniProtKB-SubCell"/>
</dbReference>
<dbReference type="GO" id="GO:0005509">
    <property type="term" value="F:calcium ion binding"/>
    <property type="evidence" value="ECO:0007669"/>
    <property type="project" value="InterPro"/>
</dbReference>
<dbReference type="GO" id="GO:0047498">
    <property type="term" value="F:calcium-dependent phospholipase A2 activity"/>
    <property type="evidence" value="ECO:0007669"/>
    <property type="project" value="TreeGrafter"/>
</dbReference>
<dbReference type="GO" id="GO:0005543">
    <property type="term" value="F:phospholipid binding"/>
    <property type="evidence" value="ECO:0007669"/>
    <property type="project" value="TreeGrafter"/>
</dbReference>
<dbReference type="GO" id="GO:0050482">
    <property type="term" value="P:arachidonate secretion"/>
    <property type="evidence" value="ECO:0007669"/>
    <property type="project" value="InterPro"/>
</dbReference>
<dbReference type="GO" id="GO:0016042">
    <property type="term" value="P:lipid catabolic process"/>
    <property type="evidence" value="ECO:0007669"/>
    <property type="project" value="UniProtKB-KW"/>
</dbReference>
<dbReference type="GO" id="GO:0006644">
    <property type="term" value="P:phospholipid metabolic process"/>
    <property type="evidence" value="ECO:0007669"/>
    <property type="project" value="InterPro"/>
</dbReference>
<dbReference type="CDD" id="cd00125">
    <property type="entry name" value="PLA2c"/>
    <property type="match status" value="1"/>
</dbReference>
<dbReference type="FunFam" id="1.20.90.10:FF:000007">
    <property type="entry name" value="Acidic phospholipase A2"/>
    <property type="match status" value="1"/>
</dbReference>
<dbReference type="Gene3D" id="1.20.90.10">
    <property type="entry name" value="Phospholipase A2 domain"/>
    <property type="match status" value="1"/>
</dbReference>
<dbReference type="InterPro" id="IPR001211">
    <property type="entry name" value="PLipase_A2"/>
</dbReference>
<dbReference type="InterPro" id="IPR033112">
    <property type="entry name" value="PLipase_A2_Asp_AS"/>
</dbReference>
<dbReference type="InterPro" id="IPR016090">
    <property type="entry name" value="PLipase_A2_dom"/>
</dbReference>
<dbReference type="InterPro" id="IPR036444">
    <property type="entry name" value="PLipase_A2_dom_sf"/>
</dbReference>
<dbReference type="InterPro" id="IPR033113">
    <property type="entry name" value="PLipase_A2_His_AS"/>
</dbReference>
<dbReference type="PANTHER" id="PTHR11716:SF51">
    <property type="entry name" value="PHOSPHOLIPASE A2"/>
    <property type="match status" value="1"/>
</dbReference>
<dbReference type="PANTHER" id="PTHR11716">
    <property type="entry name" value="PHOSPHOLIPASE A2 FAMILY MEMBER"/>
    <property type="match status" value="1"/>
</dbReference>
<dbReference type="Pfam" id="PF00068">
    <property type="entry name" value="Phospholip_A2_1"/>
    <property type="match status" value="1"/>
</dbReference>
<dbReference type="PRINTS" id="PR00389">
    <property type="entry name" value="PHPHLIPASEA2"/>
</dbReference>
<dbReference type="SMART" id="SM00085">
    <property type="entry name" value="PA2c"/>
    <property type="match status" value="1"/>
</dbReference>
<dbReference type="SUPFAM" id="SSF48619">
    <property type="entry name" value="Phospholipase A2, PLA2"/>
    <property type="match status" value="1"/>
</dbReference>
<dbReference type="PROSITE" id="PS00119">
    <property type="entry name" value="PA2_ASP"/>
    <property type="match status" value="1"/>
</dbReference>
<dbReference type="PROSITE" id="PS00118">
    <property type="entry name" value="PA2_HIS"/>
    <property type="match status" value="1"/>
</dbReference>
<feature type="chain" id="PRO_0000161690" description="Basic phospholipase A2 PA-15">
    <location>
        <begin position="1"/>
        <end position="118"/>
    </location>
</feature>
<feature type="active site" evidence="1">
    <location>
        <position position="48"/>
    </location>
</feature>
<feature type="active site" evidence="1">
    <location>
        <position position="92"/>
    </location>
</feature>
<feature type="binding site" evidence="1">
    <location>
        <position position="28"/>
    </location>
    <ligand>
        <name>Ca(2+)</name>
        <dbReference type="ChEBI" id="CHEBI:29108"/>
    </ligand>
</feature>
<feature type="binding site" evidence="1">
    <location>
        <position position="30"/>
    </location>
    <ligand>
        <name>Ca(2+)</name>
        <dbReference type="ChEBI" id="CHEBI:29108"/>
    </ligand>
</feature>
<feature type="binding site" evidence="1">
    <location>
        <position position="32"/>
    </location>
    <ligand>
        <name>Ca(2+)</name>
        <dbReference type="ChEBI" id="CHEBI:29108"/>
    </ligand>
</feature>
<feature type="binding site" evidence="1">
    <location>
        <position position="49"/>
    </location>
    <ligand>
        <name>Ca(2+)</name>
        <dbReference type="ChEBI" id="CHEBI:29108"/>
    </ligand>
</feature>
<feature type="disulfide bond" evidence="1">
    <location>
        <begin position="11"/>
        <end position="71"/>
    </location>
</feature>
<feature type="disulfide bond" evidence="1">
    <location>
        <begin position="27"/>
        <end position="117"/>
    </location>
</feature>
<feature type="disulfide bond" evidence="1">
    <location>
        <begin position="29"/>
        <end position="45"/>
    </location>
</feature>
<feature type="disulfide bond" evidence="1">
    <location>
        <begin position="44"/>
        <end position="98"/>
    </location>
</feature>
<feature type="disulfide bond" evidence="1">
    <location>
        <begin position="51"/>
        <end position="91"/>
    </location>
</feature>
<feature type="disulfide bond" evidence="1">
    <location>
        <begin position="60"/>
        <end position="84"/>
    </location>
</feature>
<feature type="disulfide bond" evidence="1">
    <location>
        <begin position="78"/>
        <end position="89"/>
    </location>
</feature>